<accession>P0DE69</accession>
<accession>P66395</accession>
<accession>Q9A1V1</accession>
<evidence type="ECO:0000255" key="1">
    <source>
        <dbReference type="HAMAP-Rule" id="MF_01315"/>
    </source>
</evidence>
<evidence type="ECO:0000256" key="2">
    <source>
        <dbReference type="SAM" id="MobiDB-lite"/>
    </source>
</evidence>
<evidence type="ECO:0000305" key="3"/>
<dbReference type="EMBL" id="BA000034">
    <property type="protein sequence ID" value="BAC63161.1"/>
    <property type="molecule type" value="Genomic_DNA"/>
</dbReference>
<dbReference type="RefSeq" id="WP_002986615.1">
    <property type="nucleotide sequence ID" value="NC_004606.1"/>
</dbReference>
<dbReference type="SMR" id="P0DE69"/>
<dbReference type="GeneID" id="69900050"/>
<dbReference type="KEGG" id="sps:SPs0066"/>
<dbReference type="HOGENOM" id="CLU_103849_1_1_9"/>
<dbReference type="GO" id="GO:0005829">
    <property type="term" value="C:cytosol"/>
    <property type="evidence" value="ECO:0007669"/>
    <property type="project" value="TreeGrafter"/>
</dbReference>
<dbReference type="GO" id="GO:0015935">
    <property type="term" value="C:small ribosomal subunit"/>
    <property type="evidence" value="ECO:0007669"/>
    <property type="project" value="TreeGrafter"/>
</dbReference>
<dbReference type="GO" id="GO:0019843">
    <property type="term" value="F:rRNA binding"/>
    <property type="evidence" value="ECO:0007669"/>
    <property type="project" value="UniProtKB-UniRule"/>
</dbReference>
<dbReference type="GO" id="GO:0003735">
    <property type="term" value="F:structural constituent of ribosome"/>
    <property type="evidence" value="ECO:0007669"/>
    <property type="project" value="InterPro"/>
</dbReference>
<dbReference type="GO" id="GO:0000049">
    <property type="term" value="F:tRNA binding"/>
    <property type="evidence" value="ECO:0007669"/>
    <property type="project" value="UniProtKB-UniRule"/>
</dbReference>
<dbReference type="GO" id="GO:0006412">
    <property type="term" value="P:translation"/>
    <property type="evidence" value="ECO:0007669"/>
    <property type="project" value="UniProtKB-UniRule"/>
</dbReference>
<dbReference type="FunFam" id="1.10.8.50:FF:000001">
    <property type="entry name" value="30S ribosomal protein S13"/>
    <property type="match status" value="1"/>
</dbReference>
<dbReference type="FunFam" id="4.10.910.10:FF:000001">
    <property type="entry name" value="30S ribosomal protein S13"/>
    <property type="match status" value="1"/>
</dbReference>
<dbReference type="Gene3D" id="1.10.8.50">
    <property type="match status" value="1"/>
</dbReference>
<dbReference type="Gene3D" id="4.10.910.10">
    <property type="entry name" value="30s ribosomal protein s13, domain 2"/>
    <property type="match status" value="1"/>
</dbReference>
<dbReference type="HAMAP" id="MF_01315">
    <property type="entry name" value="Ribosomal_uS13"/>
    <property type="match status" value="1"/>
</dbReference>
<dbReference type="InterPro" id="IPR027437">
    <property type="entry name" value="Rbsml_uS13_C"/>
</dbReference>
<dbReference type="InterPro" id="IPR001892">
    <property type="entry name" value="Ribosomal_uS13"/>
</dbReference>
<dbReference type="InterPro" id="IPR010979">
    <property type="entry name" value="Ribosomal_uS13-like_H2TH"/>
</dbReference>
<dbReference type="InterPro" id="IPR019980">
    <property type="entry name" value="Ribosomal_uS13_bac-type"/>
</dbReference>
<dbReference type="InterPro" id="IPR018269">
    <property type="entry name" value="Ribosomal_uS13_CS"/>
</dbReference>
<dbReference type="NCBIfam" id="TIGR03631">
    <property type="entry name" value="uS13_bact"/>
    <property type="match status" value="1"/>
</dbReference>
<dbReference type="PANTHER" id="PTHR10871">
    <property type="entry name" value="30S RIBOSOMAL PROTEIN S13/40S RIBOSOMAL PROTEIN S18"/>
    <property type="match status" value="1"/>
</dbReference>
<dbReference type="PANTHER" id="PTHR10871:SF1">
    <property type="entry name" value="SMALL RIBOSOMAL SUBUNIT PROTEIN US13M"/>
    <property type="match status" value="1"/>
</dbReference>
<dbReference type="Pfam" id="PF00416">
    <property type="entry name" value="Ribosomal_S13"/>
    <property type="match status" value="1"/>
</dbReference>
<dbReference type="PIRSF" id="PIRSF002134">
    <property type="entry name" value="Ribosomal_S13"/>
    <property type="match status" value="1"/>
</dbReference>
<dbReference type="SUPFAM" id="SSF46946">
    <property type="entry name" value="S13-like H2TH domain"/>
    <property type="match status" value="1"/>
</dbReference>
<dbReference type="PROSITE" id="PS00646">
    <property type="entry name" value="RIBOSOMAL_S13_1"/>
    <property type="match status" value="1"/>
</dbReference>
<dbReference type="PROSITE" id="PS50159">
    <property type="entry name" value="RIBOSOMAL_S13_2"/>
    <property type="match status" value="1"/>
</dbReference>
<reference key="1">
    <citation type="journal article" date="2003" name="Genome Res.">
        <title>Genome sequence of an M3 strain of Streptococcus pyogenes reveals a large-scale genomic rearrangement in invasive strains and new insights into phage evolution.</title>
        <authorList>
            <person name="Nakagawa I."/>
            <person name="Kurokawa K."/>
            <person name="Yamashita A."/>
            <person name="Nakata M."/>
            <person name="Tomiyasu Y."/>
            <person name="Okahashi N."/>
            <person name="Kawabata S."/>
            <person name="Yamazaki K."/>
            <person name="Shiba T."/>
            <person name="Yasunaga T."/>
            <person name="Hayashi H."/>
            <person name="Hattori M."/>
            <person name="Hamada S."/>
        </authorList>
    </citation>
    <scope>NUCLEOTIDE SEQUENCE [LARGE SCALE GENOMIC DNA]</scope>
    <source>
        <strain>SSI-1</strain>
    </source>
</reference>
<organism>
    <name type="scientific">Streptococcus pyogenes serotype M3 (strain SSI-1)</name>
    <dbReference type="NCBI Taxonomy" id="193567"/>
    <lineage>
        <taxon>Bacteria</taxon>
        <taxon>Bacillati</taxon>
        <taxon>Bacillota</taxon>
        <taxon>Bacilli</taxon>
        <taxon>Lactobacillales</taxon>
        <taxon>Streptococcaceae</taxon>
        <taxon>Streptococcus</taxon>
    </lineage>
</organism>
<protein>
    <recommendedName>
        <fullName evidence="1">Small ribosomal subunit protein uS13</fullName>
    </recommendedName>
    <alternativeName>
        <fullName evidence="3">30S ribosomal protein S13</fullName>
    </alternativeName>
</protein>
<proteinExistence type="inferred from homology"/>
<comment type="function">
    <text evidence="1">Located at the top of the head of the 30S subunit, it contacts several helices of the 16S rRNA. In the 70S ribosome it contacts the 23S rRNA (bridge B1a) and protein L5 of the 50S subunit (bridge B1b), connecting the 2 subunits; these bridges are implicated in subunit movement. Contacts the tRNAs in the A and P-sites.</text>
</comment>
<comment type="subunit">
    <text evidence="1">Part of the 30S ribosomal subunit. Forms a loose heterodimer with protein S19. Forms two bridges to the 50S subunit in the 70S ribosome.</text>
</comment>
<comment type="similarity">
    <text evidence="1">Belongs to the universal ribosomal protein uS13 family.</text>
</comment>
<feature type="chain" id="PRO_0000411524" description="Small ribosomal subunit protein uS13">
    <location>
        <begin position="1"/>
        <end position="121"/>
    </location>
</feature>
<feature type="region of interest" description="Disordered" evidence="2">
    <location>
        <begin position="96"/>
        <end position="121"/>
    </location>
</feature>
<feature type="compositionally biased region" description="Basic residues" evidence="2">
    <location>
        <begin position="106"/>
        <end position="121"/>
    </location>
</feature>
<sequence>MARIAGVDIPNDKRVVISLTYVYGIGLATSKKILAAAGISEDIRVKDLTSDQEDAIRREVDAIKVEGDLRREVNMNIKRLMEIGSYRGIRHRRGLPVRGQNTKNNARTRKGKAVAIAGKKK</sequence>
<gene>
    <name evidence="1" type="primary">rpsM</name>
    <name type="ordered locus">SPs0066</name>
</gene>
<keyword id="KW-0687">Ribonucleoprotein</keyword>
<keyword id="KW-0689">Ribosomal protein</keyword>
<keyword id="KW-0694">RNA-binding</keyword>
<keyword id="KW-0699">rRNA-binding</keyword>
<keyword id="KW-0820">tRNA-binding</keyword>
<name>RS13_STRPQ</name>